<gene>
    <name type="primary">LOX3.1</name>
    <name type="synonym">LOX-H3</name>
</gene>
<organism>
    <name type="scientific">Solanum tuberosum</name>
    <name type="common">Potato</name>
    <dbReference type="NCBI Taxonomy" id="4113"/>
    <lineage>
        <taxon>Eukaryota</taxon>
        <taxon>Viridiplantae</taxon>
        <taxon>Streptophyta</taxon>
        <taxon>Embryophyta</taxon>
        <taxon>Tracheophyta</taxon>
        <taxon>Spermatophyta</taxon>
        <taxon>Magnoliopsida</taxon>
        <taxon>eudicotyledons</taxon>
        <taxon>Gunneridae</taxon>
        <taxon>Pentapetalae</taxon>
        <taxon>asterids</taxon>
        <taxon>lamiids</taxon>
        <taxon>Solanales</taxon>
        <taxon>Solanaceae</taxon>
        <taxon>Solanoideae</taxon>
        <taxon>Solaneae</taxon>
        <taxon>Solanum</taxon>
    </lineage>
</organism>
<keyword id="KW-0150">Chloroplast</keyword>
<keyword id="KW-0223">Dioxygenase</keyword>
<keyword id="KW-0275">Fatty acid biosynthesis</keyword>
<keyword id="KW-0276">Fatty acid metabolism</keyword>
<keyword id="KW-0408">Iron</keyword>
<keyword id="KW-0444">Lipid biosynthesis</keyword>
<keyword id="KW-0443">Lipid metabolism</keyword>
<keyword id="KW-0479">Metal-binding</keyword>
<keyword id="KW-0560">Oxidoreductase</keyword>
<keyword id="KW-0925">Oxylipin biosynthesis</keyword>
<keyword id="KW-0934">Plastid</keyword>
<keyword id="KW-1185">Reference proteome</keyword>
<keyword id="KW-0793">Thylakoid</keyword>
<keyword id="KW-0809">Transit peptide</keyword>
<protein>
    <recommendedName>
        <fullName>Linoleate 13S-lipoxygenase 3-1, chloroplastic</fullName>
        <ecNumber>1.13.11.12</ecNumber>
    </recommendedName>
</protein>
<feature type="transit peptide" description="Chloroplast" evidence="2">
    <location>
        <begin position="1"/>
        <end position="83"/>
    </location>
</feature>
<feature type="chain" id="PRO_0000412928" description="Linoleate 13S-lipoxygenase 3-1, chloroplastic">
    <location>
        <begin position="84"/>
        <end position="914"/>
    </location>
</feature>
<feature type="domain" description="PLAT" evidence="3">
    <location>
        <begin position="96"/>
        <end position="218"/>
    </location>
</feature>
<feature type="domain" description="Lipoxygenase" evidence="4">
    <location>
        <begin position="221"/>
        <end position="914"/>
    </location>
</feature>
<feature type="binding site" evidence="4">
    <location>
        <position position="574"/>
    </location>
    <ligand>
        <name>Fe cation</name>
        <dbReference type="ChEBI" id="CHEBI:24875"/>
        <note>catalytic</note>
    </ligand>
</feature>
<feature type="binding site" evidence="4">
    <location>
        <position position="579"/>
    </location>
    <ligand>
        <name>Fe cation</name>
        <dbReference type="ChEBI" id="CHEBI:24875"/>
        <note>catalytic</note>
    </ligand>
</feature>
<feature type="binding site" evidence="4">
    <location>
        <position position="765"/>
    </location>
    <ligand>
        <name>Fe cation</name>
        <dbReference type="ChEBI" id="CHEBI:24875"/>
        <note>catalytic</note>
    </ligand>
</feature>
<feature type="binding site" evidence="4">
    <location>
        <position position="769"/>
    </location>
    <ligand>
        <name>Fe cation</name>
        <dbReference type="ChEBI" id="CHEBI:24875"/>
        <note>catalytic</note>
    </ligand>
</feature>
<feature type="binding site" evidence="4">
    <location>
        <position position="914"/>
    </location>
    <ligand>
        <name>Fe cation</name>
        <dbReference type="ChEBI" id="CHEBI:24875"/>
        <note>catalytic</note>
    </ligand>
</feature>
<name>LOX31_SOLTU</name>
<accession>O24371</accession>
<reference key="1">
    <citation type="journal article" date="1996" name="J. Biol. Chem.">
        <title>Characterization of three potato lipoxygenases with distinct enzymatic activities and different organ-specific and wound-regulated expression patterns.</title>
        <authorList>
            <person name="Royo J."/>
            <person name="Vancanneyt G."/>
            <person name="Perez A.G."/>
            <person name="Sanz C."/>
            <person name="Stormann K."/>
            <person name="Rosahl S."/>
            <person name="Sanchez-Serrano J.J."/>
        </authorList>
    </citation>
    <scope>NUCLEOTIDE SEQUENCE [MRNA]</scope>
    <scope>FUNCTION</scope>
    <scope>CATALYTIC ACTIVITY</scope>
    <scope>TISSUE SPECIFICITY</scope>
    <scope>INDUCTION BY WOUNDING; JASMONATE AND ABSCISIC ACID</scope>
    <scope>BIOPHYSICOCHEMICAL PROPERTIES</scope>
    <source>
        <tissue>Leaf</tissue>
    </source>
</reference>
<reference key="2">
    <citation type="journal article" date="1999" name="Proc. Natl. Acad. Sci. U.S.A.">
        <title>Antisense-mediated depletion of a potato lipoxygenase reduces wound induction of proteinase inhibitors and increases weight gain of insect pests.</title>
        <authorList>
            <person name="Royo J."/>
            <person name="Leon J."/>
            <person name="Vancanneyt G."/>
            <person name="Albar J.P."/>
            <person name="Rosahl S."/>
            <person name="Ortego F."/>
            <person name="Castanera P."/>
            <person name="Sanchez-Serrano J.J."/>
        </authorList>
    </citation>
    <scope>FUNCTION</scope>
</reference>
<reference key="3">
    <citation type="journal article" date="2000" name="Plant Physiol.">
        <title>A leaf lipoxygenase of potato induced specifically by pathogen infection.</title>
        <authorList>
            <person name="Kolomiets M.V."/>
            <person name="Chen H."/>
            <person name="Gladon R.J."/>
            <person name="Braun E.J."/>
            <person name="Hannapel D.J."/>
        </authorList>
    </citation>
    <scope>INDUCTION BY PATHOGEN</scope>
</reference>
<reference key="4">
    <citation type="journal article" date="2002" name="J. Biol. Chem.">
        <title>Lipoxygenase H1 gene silencing reveals a specific role in supplying fatty acid hydroperoxides for aliphatic aldehyde production.</title>
        <authorList>
            <person name="Leon J."/>
            <person name="Royo J."/>
            <person name="Vancanneyt G."/>
            <person name="Sanz C."/>
            <person name="Silkowski H."/>
            <person name="Griffiths G."/>
            <person name="Sanchez-Serrano J.J."/>
        </authorList>
    </citation>
    <scope>SUBCELLULAR LOCATION</scope>
</reference>
<reference key="5">
    <citation type="journal article" date="2007" name="J. Exp. Bot.">
        <title>Differential distribution of the lipoxygenase pathway enzymes within potato chloroplasts.</title>
        <authorList>
            <person name="Farmaki T."/>
            <person name="Sanmartin M."/>
            <person name="Jimenez P."/>
            <person name="Paneque M."/>
            <person name="Sanz C."/>
            <person name="Vancanneyt G."/>
            <person name="Leon J."/>
            <person name="Sanchez-Serrano J.J."/>
        </authorList>
    </citation>
    <scope>SUBCELLULAR LOCATION</scope>
    <scope>INDUCTION BY WOUNDING</scope>
</reference>
<sequence>MALAKEIMGISLLEKSSSFMNSSSMALFNPNNYHKENHLWFNQQFQGRRNLSRRKAFRQSTMAAISENLIKVVPEKAVRFKVRAVVTVRNKNKEDLKETIVKHLDAFTDKIGRNVTLELISTDMDPNTKGPKKSNQAVLKDWSKKSNLKTERVNYTAEFIVDSNFGNPGAITVTNKHQQEFFLESITIEGFACGPVHFPCNSWVQPKKDHPGKRIFFSNQPYLPDETPAGLKSLRERELRDLRGDGKGVRKLSDRIYDYDIYNDLGNPDKGIDFARPKLGGDDNVPYPRRCRSGRVPTDTDISAESRVEKPNPTYVPRDEQFEESKMNTFSTSRLKAVLHNLIPSLMASISSNNHDFKGFSDIDNLYSKGLLLKLGLQDEVLKKLPLPKVVSSIKEGDLLKYDTPKILSKDKFAWLRDDEFARQAIAGVNPVSIEKLQFFPPVSKLDPEIYGPQESALKEEHILGHLNGMTVQEALDANKLFIVDHHDVYLPFLDRINALDGRKAYATRTIFFLSDVGTLKPIAIELSLPQTGPSSRSKRVVTPPVCATGNWTWQIAKAHVCANDAGVHQLVNHWLRTHASLEPFILAAHRQLSAMHPIYKLLDPHMRYTLEINGLARQSLINADGVIEACFTPGRYCMEISAAAYKNWRFDLEGLPADLIRRGMAVPDSTQPHGLKLLIEDYPYAADGLMIWGAIESWVRDYVNHYYPSSAQVCSDRELQAWYAETINVGHVDLRNEEWWPTLATPEDLISILTTLIWLASAQHAALNFGQYPYGGYVPNRPPLMRRLIPDENDPEYAVFLADPQKYFFSALPSLLQATKFMAVVDTLSTHSPDEEYLGERHQPSTWTGDAEIVEAFYKFSAEIGRIEKEIDERNANTKLKNRCGAGVLPYELLAPSSGPGVTCRGVPNSVSI</sequence>
<proteinExistence type="evidence at protein level"/>
<evidence type="ECO:0000250" key="1"/>
<evidence type="ECO:0000255" key="2"/>
<evidence type="ECO:0000255" key="3">
    <source>
        <dbReference type="PROSITE-ProRule" id="PRU00152"/>
    </source>
</evidence>
<evidence type="ECO:0000255" key="4">
    <source>
        <dbReference type="PROSITE-ProRule" id="PRU00726"/>
    </source>
</evidence>
<evidence type="ECO:0000269" key="5">
    <source>
    </source>
</evidence>
<evidence type="ECO:0000269" key="6">
    <source>
    </source>
</evidence>
<evidence type="ECO:0000269" key="7">
    <source>
    </source>
</evidence>
<evidence type="ECO:0000269" key="8">
    <source>
    </source>
</evidence>
<evidence type="ECO:0000305" key="9"/>
<dbReference type="EC" id="1.13.11.12"/>
<dbReference type="EMBL" id="X96406">
    <property type="protein sequence ID" value="CAA65269.1"/>
    <property type="molecule type" value="mRNA"/>
</dbReference>
<dbReference type="PIR" id="T07065">
    <property type="entry name" value="T07065"/>
</dbReference>
<dbReference type="RefSeq" id="NP_001275115.1">
    <property type="nucleotide sequence ID" value="NM_001288186.1"/>
</dbReference>
<dbReference type="SMR" id="O24371"/>
<dbReference type="FunCoup" id="O24371">
    <property type="interactions" value="89"/>
</dbReference>
<dbReference type="STRING" id="4113.O24371"/>
<dbReference type="PaxDb" id="4113-PGSC0003DMT400058933"/>
<dbReference type="GeneID" id="102597498"/>
<dbReference type="KEGG" id="sot:102597498"/>
<dbReference type="eggNOG" id="ENOG502QQSP">
    <property type="taxonomic scope" value="Eukaryota"/>
</dbReference>
<dbReference type="InParanoid" id="O24371"/>
<dbReference type="OrthoDB" id="407298at2759"/>
<dbReference type="UniPathway" id="UPA00382"/>
<dbReference type="Proteomes" id="UP000011115">
    <property type="component" value="Unassembled WGS sequence"/>
</dbReference>
<dbReference type="ExpressionAtlas" id="O24371">
    <property type="expression patterns" value="baseline and differential"/>
</dbReference>
<dbReference type="GO" id="GO:0009570">
    <property type="term" value="C:chloroplast stroma"/>
    <property type="evidence" value="ECO:0007669"/>
    <property type="project" value="UniProtKB-SubCell"/>
</dbReference>
<dbReference type="GO" id="GO:0009534">
    <property type="term" value="C:chloroplast thylakoid"/>
    <property type="evidence" value="ECO:0007669"/>
    <property type="project" value="UniProtKB-SubCell"/>
</dbReference>
<dbReference type="GO" id="GO:0016165">
    <property type="term" value="F:linoleate 13S-lipoxygenase activity"/>
    <property type="evidence" value="ECO:0000314"/>
    <property type="project" value="CACAO"/>
</dbReference>
<dbReference type="GO" id="GO:0046872">
    <property type="term" value="F:metal ion binding"/>
    <property type="evidence" value="ECO:0007669"/>
    <property type="project" value="UniProtKB-KW"/>
</dbReference>
<dbReference type="GO" id="GO:0016702">
    <property type="term" value="F:oxidoreductase activity, acting on single donors with incorporation of molecular oxygen, incorporation of two atoms of oxygen"/>
    <property type="evidence" value="ECO:0000318"/>
    <property type="project" value="GO_Central"/>
</dbReference>
<dbReference type="GO" id="GO:0006633">
    <property type="term" value="P:fatty acid biosynthetic process"/>
    <property type="evidence" value="ECO:0007669"/>
    <property type="project" value="UniProtKB-KW"/>
</dbReference>
<dbReference type="GO" id="GO:0034440">
    <property type="term" value="P:lipid oxidation"/>
    <property type="evidence" value="ECO:0000318"/>
    <property type="project" value="GO_Central"/>
</dbReference>
<dbReference type="GO" id="GO:0031408">
    <property type="term" value="P:oxylipin biosynthetic process"/>
    <property type="evidence" value="ECO:0007669"/>
    <property type="project" value="UniProtKB-UniPathway"/>
</dbReference>
<dbReference type="CDD" id="cd01751">
    <property type="entry name" value="PLAT_LH2"/>
    <property type="match status" value="1"/>
</dbReference>
<dbReference type="FunFam" id="1.20.245.10:FF:000002">
    <property type="entry name" value="Lipoxygenase"/>
    <property type="match status" value="1"/>
</dbReference>
<dbReference type="FunFam" id="2.60.60.20:FF:000018">
    <property type="entry name" value="Lipoxygenase"/>
    <property type="match status" value="1"/>
</dbReference>
<dbReference type="FunFam" id="3.10.450.60:FF:000002">
    <property type="entry name" value="Lipoxygenase"/>
    <property type="match status" value="1"/>
</dbReference>
<dbReference type="FunFam" id="4.10.372.10:FF:000001">
    <property type="entry name" value="Lipoxygenase"/>
    <property type="match status" value="1"/>
</dbReference>
<dbReference type="FunFam" id="4.10.375.10:FF:000001">
    <property type="entry name" value="Lipoxygenase"/>
    <property type="match status" value="1"/>
</dbReference>
<dbReference type="Gene3D" id="3.10.450.60">
    <property type="match status" value="1"/>
</dbReference>
<dbReference type="Gene3D" id="4.10.375.10">
    <property type="entry name" value="Lipoxygenase-1, Domain 2"/>
    <property type="match status" value="1"/>
</dbReference>
<dbReference type="Gene3D" id="4.10.372.10">
    <property type="entry name" value="Lipoxygenase-1, Domain 3"/>
    <property type="match status" value="1"/>
</dbReference>
<dbReference type="Gene3D" id="1.20.245.10">
    <property type="entry name" value="Lipoxygenase-1, Domain 5"/>
    <property type="match status" value="1"/>
</dbReference>
<dbReference type="Gene3D" id="2.60.60.20">
    <property type="entry name" value="PLAT/LH2 domain"/>
    <property type="match status" value="1"/>
</dbReference>
<dbReference type="InterPro" id="IPR000907">
    <property type="entry name" value="LipOase"/>
</dbReference>
<dbReference type="InterPro" id="IPR013819">
    <property type="entry name" value="LipOase_C"/>
</dbReference>
<dbReference type="InterPro" id="IPR036226">
    <property type="entry name" value="LipOase_C_sf"/>
</dbReference>
<dbReference type="InterPro" id="IPR020834">
    <property type="entry name" value="LipOase_CS"/>
</dbReference>
<dbReference type="InterPro" id="IPR020833">
    <property type="entry name" value="LipOase_Fe_BS"/>
</dbReference>
<dbReference type="InterPro" id="IPR001246">
    <property type="entry name" value="LipOase_plant"/>
</dbReference>
<dbReference type="InterPro" id="IPR042057">
    <property type="entry name" value="Lipoxy_PLAT/LH2"/>
</dbReference>
<dbReference type="InterPro" id="IPR027433">
    <property type="entry name" value="Lipoxygenase_dom_3"/>
</dbReference>
<dbReference type="InterPro" id="IPR001024">
    <property type="entry name" value="PLAT/LH2_dom"/>
</dbReference>
<dbReference type="InterPro" id="IPR036392">
    <property type="entry name" value="PLAT/LH2_dom_sf"/>
</dbReference>
<dbReference type="PANTHER" id="PTHR11771">
    <property type="entry name" value="LIPOXYGENASE"/>
    <property type="match status" value="1"/>
</dbReference>
<dbReference type="Pfam" id="PF00305">
    <property type="entry name" value="Lipoxygenase"/>
    <property type="match status" value="1"/>
</dbReference>
<dbReference type="Pfam" id="PF01477">
    <property type="entry name" value="PLAT"/>
    <property type="match status" value="1"/>
</dbReference>
<dbReference type="PRINTS" id="PR00087">
    <property type="entry name" value="LIPOXYGENASE"/>
</dbReference>
<dbReference type="PRINTS" id="PR00468">
    <property type="entry name" value="PLTLPOXGNASE"/>
</dbReference>
<dbReference type="SMART" id="SM00308">
    <property type="entry name" value="LH2"/>
    <property type="match status" value="1"/>
</dbReference>
<dbReference type="SUPFAM" id="SSF49723">
    <property type="entry name" value="Lipase/lipooxygenase domain (PLAT/LH2 domain)"/>
    <property type="match status" value="1"/>
</dbReference>
<dbReference type="SUPFAM" id="SSF48484">
    <property type="entry name" value="Lipoxigenase"/>
    <property type="match status" value="1"/>
</dbReference>
<dbReference type="PROSITE" id="PS00711">
    <property type="entry name" value="LIPOXYGENASE_1"/>
    <property type="match status" value="1"/>
</dbReference>
<dbReference type="PROSITE" id="PS00081">
    <property type="entry name" value="LIPOXYGENASE_2"/>
    <property type="match status" value="1"/>
</dbReference>
<dbReference type="PROSITE" id="PS51393">
    <property type="entry name" value="LIPOXYGENASE_3"/>
    <property type="match status" value="1"/>
</dbReference>
<dbReference type="PROSITE" id="PS50095">
    <property type="entry name" value="PLAT"/>
    <property type="match status" value="1"/>
</dbReference>
<comment type="function">
    <text evidence="7 8">Plant lipoxygenases may be involved in a number of diverse aspects of plant physiology including growth and development, pest resistance, and senescence or responses to wounding. Required for the regulation of wound-induced gene expression, but is not involved in the bulk production of jasmonate upon wounding. Catalyzes the hydroperoxidation of lipids containing a cis,cis-1,4-pentadiene structure. Linolenic acid is the preferred substrate, before linoleic and arachidonic acids.</text>
</comment>
<comment type="catalytic activity">
    <reaction evidence="7">
        <text>(9Z,12Z)-octadecadienoate + O2 = (13S)-hydroperoxy-(9Z,11E)-octadecadienoate</text>
        <dbReference type="Rhea" id="RHEA:22780"/>
        <dbReference type="ChEBI" id="CHEBI:15379"/>
        <dbReference type="ChEBI" id="CHEBI:30245"/>
        <dbReference type="ChEBI" id="CHEBI:57466"/>
        <dbReference type="EC" id="1.13.11.12"/>
    </reaction>
</comment>
<comment type="catalytic activity">
    <reaction evidence="7">
        <text>(9Z,12Z,15Z)-octadecatrienoate + O2 = (13S)-hydroperoxy-(9Z,11E,15Z)-octadecatrienoate</text>
        <dbReference type="Rhea" id="RHEA:34495"/>
        <dbReference type="ChEBI" id="CHEBI:15379"/>
        <dbReference type="ChEBI" id="CHEBI:32387"/>
        <dbReference type="ChEBI" id="CHEBI:58757"/>
        <dbReference type="EC" id="1.13.11.12"/>
    </reaction>
</comment>
<comment type="cofactor">
    <cofactor evidence="4">
        <name>Fe cation</name>
        <dbReference type="ChEBI" id="CHEBI:24875"/>
    </cofactor>
    <text evidence="4">Binds 1 Fe cation per subunit.</text>
</comment>
<comment type="biophysicochemical properties">
    <phDependence>
        <text evidence="7">Optimum pH is 6.0.</text>
    </phDependence>
</comment>
<comment type="pathway">
    <text evidence="4">Lipid metabolism; oxylipin biosynthesis.</text>
</comment>
<comment type="subunit">
    <text evidence="1">Monomer.</text>
</comment>
<comment type="subcellular location">
    <subcellularLocation>
        <location>Plastid</location>
        <location>Chloroplast stroma</location>
    </subcellularLocation>
    <subcellularLocation>
        <location>Plastid</location>
        <location>Chloroplast thylakoid</location>
    </subcellularLocation>
</comment>
<comment type="tissue specificity">
    <text evidence="7">Expressed in roots and leaves. Detected in tubers and flower buds.</text>
</comment>
<comment type="induction">
    <text evidence="5 6 7">Up-regulated locally and systemically 30 minutes after wounding. Up-regulated by jasmonate and abscisic acid treatment. Not induced by pathogen infection.</text>
</comment>
<comment type="miscellaneous">
    <text>Depletion of LOX-H3 by co-suppression-mediated gene silencing leads to higher tuber yield, but has no effect on the number of tubers per plant.</text>
</comment>
<comment type="similarity">
    <text evidence="9">Belongs to the lipoxygenase family.</text>
</comment>